<accession>B7IWR8</accession>
<name>Y4761_BACC2</name>
<organism>
    <name type="scientific">Bacillus cereus (strain G9842)</name>
    <dbReference type="NCBI Taxonomy" id="405531"/>
    <lineage>
        <taxon>Bacteria</taxon>
        <taxon>Bacillati</taxon>
        <taxon>Bacillota</taxon>
        <taxon>Bacilli</taxon>
        <taxon>Bacillales</taxon>
        <taxon>Bacillaceae</taxon>
        <taxon>Bacillus</taxon>
        <taxon>Bacillus cereus group</taxon>
    </lineage>
</organism>
<gene>
    <name type="ordered locus">BCG9842_B4761</name>
</gene>
<feature type="chain" id="PRO_1000132152" description="Probable transcriptional regulatory protein BCG9842_B4761">
    <location>
        <begin position="1"/>
        <end position="239"/>
    </location>
</feature>
<dbReference type="EMBL" id="CP001186">
    <property type="protein sequence ID" value="ACK94580.1"/>
    <property type="molecule type" value="Genomic_DNA"/>
</dbReference>
<dbReference type="RefSeq" id="WP_000532954.1">
    <property type="nucleotide sequence ID" value="NC_011772.1"/>
</dbReference>
<dbReference type="SMR" id="B7IWR8"/>
<dbReference type="KEGG" id="bcg:BCG9842_B4761"/>
<dbReference type="HOGENOM" id="CLU_062974_2_0_9"/>
<dbReference type="Proteomes" id="UP000006744">
    <property type="component" value="Chromosome"/>
</dbReference>
<dbReference type="GO" id="GO:0005829">
    <property type="term" value="C:cytosol"/>
    <property type="evidence" value="ECO:0007669"/>
    <property type="project" value="TreeGrafter"/>
</dbReference>
<dbReference type="GO" id="GO:0003677">
    <property type="term" value="F:DNA binding"/>
    <property type="evidence" value="ECO:0007669"/>
    <property type="project" value="UniProtKB-UniRule"/>
</dbReference>
<dbReference type="GO" id="GO:0006355">
    <property type="term" value="P:regulation of DNA-templated transcription"/>
    <property type="evidence" value="ECO:0007669"/>
    <property type="project" value="UniProtKB-UniRule"/>
</dbReference>
<dbReference type="FunFam" id="1.10.10.200:FF:000003">
    <property type="entry name" value="Probable transcriptional regulatory protein YeeN"/>
    <property type="match status" value="1"/>
</dbReference>
<dbReference type="FunFam" id="3.30.70.980:FF:000004">
    <property type="entry name" value="Probable transcriptional regulatory protein YeeN"/>
    <property type="match status" value="1"/>
</dbReference>
<dbReference type="Gene3D" id="1.10.10.200">
    <property type="match status" value="1"/>
</dbReference>
<dbReference type="Gene3D" id="3.30.70.980">
    <property type="match status" value="2"/>
</dbReference>
<dbReference type="HAMAP" id="MF_00693">
    <property type="entry name" value="Transcrip_reg_TACO1"/>
    <property type="match status" value="1"/>
</dbReference>
<dbReference type="HAMAP" id="MF_00918">
    <property type="entry name" value="Transcrip_reg_TACO1_YeeN"/>
    <property type="match status" value="1"/>
</dbReference>
<dbReference type="InterPro" id="IPR017856">
    <property type="entry name" value="Integrase-like_N"/>
</dbReference>
<dbReference type="InterPro" id="IPR048300">
    <property type="entry name" value="TACO1_YebC-like_2nd/3rd_dom"/>
</dbReference>
<dbReference type="InterPro" id="IPR049083">
    <property type="entry name" value="TACO1_YebC_N"/>
</dbReference>
<dbReference type="InterPro" id="IPR002876">
    <property type="entry name" value="Transcrip_reg_TACO1-like"/>
</dbReference>
<dbReference type="InterPro" id="IPR026564">
    <property type="entry name" value="Transcrip_reg_TACO1-like_dom3"/>
</dbReference>
<dbReference type="InterPro" id="IPR026562">
    <property type="entry name" value="Transcrip_reg_TACO1_YeeN"/>
</dbReference>
<dbReference type="InterPro" id="IPR029072">
    <property type="entry name" value="YebC-like"/>
</dbReference>
<dbReference type="NCBIfam" id="NF001030">
    <property type="entry name" value="PRK00110.1"/>
    <property type="match status" value="1"/>
</dbReference>
<dbReference type="NCBIfam" id="NF009044">
    <property type="entry name" value="PRK12378.1"/>
    <property type="match status" value="1"/>
</dbReference>
<dbReference type="NCBIfam" id="TIGR01033">
    <property type="entry name" value="YebC/PmpR family DNA-binding transcriptional regulator"/>
    <property type="match status" value="1"/>
</dbReference>
<dbReference type="PANTHER" id="PTHR12532">
    <property type="entry name" value="TRANSLATIONAL ACTIVATOR OF CYTOCHROME C OXIDASE 1"/>
    <property type="match status" value="1"/>
</dbReference>
<dbReference type="PANTHER" id="PTHR12532:SF0">
    <property type="entry name" value="TRANSLATIONAL ACTIVATOR OF CYTOCHROME C OXIDASE 1"/>
    <property type="match status" value="1"/>
</dbReference>
<dbReference type="Pfam" id="PF20772">
    <property type="entry name" value="TACO1_YebC_N"/>
    <property type="match status" value="1"/>
</dbReference>
<dbReference type="Pfam" id="PF01709">
    <property type="entry name" value="Transcrip_reg"/>
    <property type="match status" value="1"/>
</dbReference>
<dbReference type="SUPFAM" id="SSF75625">
    <property type="entry name" value="YebC-like"/>
    <property type="match status" value="1"/>
</dbReference>
<reference key="1">
    <citation type="submission" date="2008-10" db="EMBL/GenBank/DDBJ databases">
        <title>Genome sequence of Bacillus cereus G9842.</title>
        <authorList>
            <person name="Dodson R.J."/>
            <person name="Durkin A.S."/>
            <person name="Rosovitz M.J."/>
            <person name="Rasko D.A."/>
            <person name="Hoffmaster A."/>
            <person name="Ravel J."/>
            <person name="Sutton G."/>
        </authorList>
    </citation>
    <scope>NUCLEOTIDE SEQUENCE [LARGE SCALE GENOMIC DNA]</scope>
    <source>
        <strain>G9842</strain>
    </source>
</reference>
<keyword id="KW-0963">Cytoplasm</keyword>
<keyword id="KW-0238">DNA-binding</keyword>
<keyword id="KW-0804">Transcription</keyword>
<keyword id="KW-0805">Transcription regulation</keyword>
<protein>
    <recommendedName>
        <fullName evidence="1">Probable transcriptional regulatory protein BCG9842_B4761</fullName>
    </recommendedName>
</protein>
<proteinExistence type="inferred from homology"/>
<sequence>MGRKWNNIKDKKASKDANTSRIYAKFGREIYVAAKQGEPDPESNQALRVVLERAKTYNVPRTIIDRAVEKAKGGSEENYDELRYEGFGPNGAMVIVDTLTNNVNRTAADVRAAFSKNSGNMGVNGSVAYMFDATAVIGLEGKTSDEVLEILMEADVDARDILEEEDSVIVYAEPDQFHSVQSALKGAGVEEFTVAELTMLAQSDVTLPEDAQVQFEKMVDALEDLEDVQQVYHNVDLGE</sequence>
<evidence type="ECO:0000255" key="1">
    <source>
        <dbReference type="HAMAP-Rule" id="MF_00918"/>
    </source>
</evidence>
<comment type="subcellular location">
    <subcellularLocation>
        <location evidence="1">Cytoplasm</location>
    </subcellularLocation>
</comment>
<comment type="similarity">
    <text evidence="1">Belongs to the TACO1 family. YeeN subfamily.</text>
</comment>